<protein>
    <recommendedName>
        <fullName evidence="1">Lipoyl synthase</fullName>
        <ecNumber evidence="1">2.8.1.8</ecNumber>
    </recommendedName>
    <alternativeName>
        <fullName evidence="1">Lip-syn</fullName>
        <shortName evidence="1">LS</shortName>
    </alternativeName>
    <alternativeName>
        <fullName evidence="1">Lipoate synthase</fullName>
    </alternativeName>
    <alternativeName>
        <fullName evidence="1">Lipoic acid synthase</fullName>
    </alternativeName>
    <alternativeName>
        <fullName evidence="1">Sulfur insertion protein LipA</fullName>
    </alternativeName>
</protein>
<evidence type="ECO:0000255" key="1">
    <source>
        <dbReference type="HAMAP-Rule" id="MF_00206"/>
    </source>
</evidence>
<evidence type="ECO:0000255" key="2">
    <source>
        <dbReference type="PROSITE-ProRule" id="PRU01266"/>
    </source>
</evidence>
<sequence length="287" mass="32109">MSNVLARKPDWLKLRLSAHGEFAATRQLLEQRNLNTVCRSAMCPNLQECWSRGTATFLLLGNICTRTCRFCAVGTASIPPMPDSLEPENIAEAVEIMNLNHVVLTSVNRDDLADGGARHWQKTMQAVRQRNPKVTLECLIPDFQAQTEALDIVLAEAPEVLNHNIETVPSIYHIVRPEANYSSSLNIIRRAKEHFNLTTKSGLMVGMGETFDEVVQSLHDLVQHGCDMVTIGQYLQPSASHIPVNRYVTPEEFDRYKTVAESLGLRNVRSGPFVRSSYLAETLSPDH</sequence>
<organism>
    <name type="scientific">Chlorobium phaeobacteroides (strain DSM 266 / SMG 266 / 2430)</name>
    <dbReference type="NCBI Taxonomy" id="290317"/>
    <lineage>
        <taxon>Bacteria</taxon>
        <taxon>Pseudomonadati</taxon>
        <taxon>Chlorobiota</taxon>
        <taxon>Chlorobiia</taxon>
        <taxon>Chlorobiales</taxon>
        <taxon>Chlorobiaceae</taxon>
        <taxon>Chlorobium/Pelodictyon group</taxon>
        <taxon>Chlorobium</taxon>
    </lineage>
</organism>
<reference key="1">
    <citation type="submission" date="2006-12" db="EMBL/GenBank/DDBJ databases">
        <title>Complete sequence of Chlorobium phaeobacteroides DSM 266.</title>
        <authorList>
            <consortium name="US DOE Joint Genome Institute"/>
            <person name="Copeland A."/>
            <person name="Lucas S."/>
            <person name="Lapidus A."/>
            <person name="Barry K."/>
            <person name="Detter J.C."/>
            <person name="Glavina del Rio T."/>
            <person name="Hammon N."/>
            <person name="Israni S."/>
            <person name="Pitluck S."/>
            <person name="Goltsman E."/>
            <person name="Schmutz J."/>
            <person name="Larimer F."/>
            <person name="Land M."/>
            <person name="Hauser L."/>
            <person name="Mikhailova N."/>
            <person name="Li T."/>
            <person name="Overmann J."/>
            <person name="Bryant D.A."/>
            <person name="Richardson P."/>
        </authorList>
    </citation>
    <scope>NUCLEOTIDE SEQUENCE [LARGE SCALE GENOMIC DNA]</scope>
    <source>
        <strain>DSM 266 / SMG 266 / 2430</strain>
    </source>
</reference>
<keyword id="KW-0004">4Fe-4S</keyword>
<keyword id="KW-0963">Cytoplasm</keyword>
<keyword id="KW-0408">Iron</keyword>
<keyword id="KW-0411">Iron-sulfur</keyword>
<keyword id="KW-0479">Metal-binding</keyword>
<keyword id="KW-1185">Reference proteome</keyword>
<keyword id="KW-0949">S-adenosyl-L-methionine</keyword>
<keyword id="KW-0808">Transferase</keyword>
<accession>A1BFY3</accession>
<dbReference type="EC" id="2.8.1.8" evidence="1"/>
<dbReference type="EMBL" id="CP000492">
    <property type="protein sequence ID" value="ABL65310.1"/>
    <property type="molecule type" value="Genomic_DNA"/>
</dbReference>
<dbReference type="RefSeq" id="WP_011745134.1">
    <property type="nucleotide sequence ID" value="NC_008639.1"/>
</dbReference>
<dbReference type="SMR" id="A1BFY3"/>
<dbReference type="STRING" id="290317.Cpha266_1277"/>
<dbReference type="KEGG" id="cph:Cpha266_1277"/>
<dbReference type="eggNOG" id="COG0320">
    <property type="taxonomic scope" value="Bacteria"/>
</dbReference>
<dbReference type="HOGENOM" id="CLU_033144_2_1_10"/>
<dbReference type="OrthoDB" id="9787898at2"/>
<dbReference type="UniPathway" id="UPA00538">
    <property type="reaction ID" value="UER00593"/>
</dbReference>
<dbReference type="Proteomes" id="UP000008701">
    <property type="component" value="Chromosome"/>
</dbReference>
<dbReference type="GO" id="GO:0005737">
    <property type="term" value="C:cytoplasm"/>
    <property type="evidence" value="ECO:0007669"/>
    <property type="project" value="UniProtKB-SubCell"/>
</dbReference>
<dbReference type="GO" id="GO:0051539">
    <property type="term" value="F:4 iron, 4 sulfur cluster binding"/>
    <property type="evidence" value="ECO:0007669"/>
    <property type="project" value="UniProtKB-UniRule"/>
</dbReference>
<dbReference type="GO" id="GO:0016992">
    <property type="term" value="F:lipoate synthase activity"/>
    <property type="evidence" value="ECO:0007669"/>
    <property type="project" value="UniProtKB-UniRule"/>
</dbReference>
<dbReference type="GO" id="GO:0046872">
    <property type="term" value="F:metal ion binding"/>
    <property type="evidence" value="ECO:0007669"/>
    <property type="project" value="UniProtKB-KW"/>
</dbReference>
<dbReference type="FunFam" id="3.20.20.70:FF:000040">
    <property type="entry name" value="Lipoyl synthase"/>
    <property type="match status" value="1"/>
</dbReference>
<dbReference type="Gene3D" id="3.20.20.70">
    <property type="entry name" value="Aldolase class I"/>
    <property type="match status" value="1"/>
</dbReference>
<dbReference type="HAMAP" id="MF_00206">
    <property type="entry name" value="Lipoyl_synth"/>
    <property type="match status" value="1"/>
</dbReference>
<dbReference type="InterPro" id="IPR013785">
    <property type="entry name" value="Aldolase_TIM"/>
</dbReference>
<dbReference type="InterPro" id="IPR006638">
    <property type="entry name" value="Elp3/MiaA/NifB-like_rSAM"/>
</dbReference>
<dbReference type="InterPro" id="IPR003698">
    <property type="entry name" value="Lipoyl_synth"/>
</dbReference>
<dbReference type="InterPro" id="IPR007197">
    <property type="entry name" value="rSAM"/>
</dbReference>
<dbReference type="NCBIfam" id="TIGR00510">
    <property type="entry name" value="lipA"/>
    <property type="match status" value="1"/>
</dbReference>
<dbReference type="NCBIfam" id="NF004019">
    <property type="entry name" value="PRK05481.1"/>
    <property type="match status" value="1"/>
</dbReference>
<dbReference type="NCBIfam" id="NF009544">
    <property type="entry name" value="PRK12928.1"/>
    <property type="match status" value="1"/>
</dbReference>
<dbReference type="PANTHER" id="PTHR10949">
    <property type="entry name" value="LIPOYL SYNTHASE"/>
    <property type="match status" value="1"/>
</dbReference>
<dbReference type="PANTHER" id="PTHR10949:SF0">
    <property type="entry name" value="LIPOYL SYNTHASE, MITOCHONDRIAL"/>
    <property type="match status" value="1"/>
</dbReference>
<dbReference type="Pfam" id="PF04055">
    <property type="entry name" value="Radical_SAM"/>
    <property type="match status" value="1"/>
</dbReference>
<dbReference type="PIRSF" id="PIRSF005963">
    <property type="entry name" value="Lipoyl_synth"/>
    <property type="match status" value="1"/>
</dbReference>
<dbReference type="SFLD" id="SFLDF00271">
    <property type="entry name" value="lipoyl_synthase"/>
    <property type="match status" value="1"/>
</dbReference>
<dbReference type="SFLD" id="SFLDG01058">
    <property type="entry name" value="lipoyl_synthase_like"/>
    <property type="match status" value="1"/>
</dbReference>
<dbReference type="SMART" id="SM00729">
    <property type="entry name" value="Elp3"/>
    <property type="match status" value="1"/>
</dbReference>
<dbReference type="SUPFAM" id="SSF102114">
    <property type="entry name" value="Radical SAM enzymes"/>
    <property type="match status" value="1"/>
</dbReference>
<dbReference type="PROSITE" id="PS51918">
    <property type="entry name" value="RADICAL_SAM"/>
    <property type="match status" value="1"/>
</dbReference>
<proteinExistence type="inferred from homology"/>
<gene>
    <name evidence="1" type="primary">lipA</name>
    <name type="ordered locus">Cpha266_1277</name>
</gene>
<feature type="chain" id="PRO_1000012208" description="Lipoyl synthase">
    <location>
        <begin position="1"/>
        <end position="287"/>
    </location>
</feature>
<feature type="domain" description="Radical SAM core" evidence="2">
    <location>
        <begin position="50"/>
        <end position="266"/>
    </location>
</feature>
<feature type="binding site" evidence="1">
    <location>
        <position position="38"/>
    </location>
    <ligand>
        <name>[4Fe-4S] cluster</name>
        <dbReference type="ChEBI" id="CHEBI:49883"/>
        <label>1</label>
    </ligand>
</feature>
<feature type="binding site" evidence="1">
    <location>
        <position position="43"/>
    </location>
    <ligand>
        <name>[4Fe-4S] cluster</name>
        <dbReference type="ChEBI" id="CHEBI:49883"/>
        <label>1</label>
    </ligand>
</feature>
<feature type="binding site" evidence="1">
    <location>
        <position position="49"/>
    </location>
    <ligand>
        <name>[4Fe-4S] cluster</name>
        <dbReference type="ChEBI" id="CHEBI:49883"/>
        <label>1</label>
    </ligand>
</feature>
<feature type="binding site" evidence="1">
    <location>
        <position position="64"/>
    </location>
    <ligand>
        <name>[4Fe-4S] cluster</name>
        <dbReference type="ChEBI" id="CHEBI:49883"/>
        <label>2</label>
        <note>4Fe-4S-S-AdoMet</note>
    </ligand>
</feature>
<feature type="binding site" evidence="1">
    <location>
        <position position="68"/>
    </location>
    <ligand>
        <name>[4Fe-4S] cluster</name>
        <dbReference type="ChEBI" id="CHEBI:49883"/>
        <label>2</label>
        <note>4Fe-4S-S-AdoMet</note>
    </ligand>
</feature>
<feature type="binding site" evidence="1">
    <location>
        <position position="71"/>
    </location>
    <ligand>
        <name>[4Fe-4S] cluster</name>
        <dbReference type="ChEBI" id="CHEBI:49883"/>
        <label>2</label>
        <note>4Fe-4S-S-AdoMet</note>
    </ligand>
</feature>
<feature type="binding site" evidence="1">
    <location>
        <position position="277"/>
    </location>
    <ligand>
        <name>[4Fe-4S] cluster</name>
        <dbReference type="ChEBI" id="CHEBI:49883"/>
        <label>1</label>
    </ligand>
</feature>
<comment type="function">
    <text evidence="1">Catalyzes the radical-mediated insertion of two sulfur atoms into the C-6 and C-8 positions of the octanoyl moiety bound to the lipoyl domains of lipoate-dependent enzymes, thereby converting the octanoylated domains into lipoylated derivatives.</text>
</comment>
<comment type="catalytic activity">
    <reaction evidence="1">
        <text>[[Fe-S] cluster scaffold protein carrying a second [4Fe-4S](2+) cluster] + N(6)-octanoyl-L-lysyl-[protein] + 2 oxidized [2Fe-2S]-[ferredoxin] + 2 S-adenosyl-L-methionine + 4 H(+) = [[Fe-S] cluster scaffold protein] + N(6)-[(R)-dihydrolipoyl]-L-lysyl-[protein] + 4 Fe(3+) + 2 hydrogen sulfide + 2 5'-deoxyadenosine + 2 L-methionine + 2 reduced [2Fe-2S]-[ferredoxin]</text>
        <dbReference type="Rhea" id="RHEA:16585"/>
        <dbReference type="Rhea" id="RHEA-COMP:9928"/>
        <dbReference type="Rhea" id="RHEA-COMP:10000"/>
        <dbReference type="Rhea" id="RHEA-COMP:10001"/>
        <dbReference type="Rhea" id="RHEA-COMP:10475"/>
        <dbReference type="Rhea" id="RHEA-COMP:14568"/>
        <dbReference type="Rhea" id="RHEA-COMP:14569"/>
        <dbReference type="ChEBI" id="CHEBI:15378"/>
        <dbReference type="ChEBI" id="CHEBI:17319"/>
        <dbReference type="ChEBI" id="CHEBI:29034"/>
        <dbReference type="ChEBI" id="CHEBI:29919"/>
        <dbReference type="ChEBI" id="CHEBI:33722"/>
        <dbReference type="ChEBI" id="CHEBI:33737"/>
        <dbReference type="ChEBI" id="CHEBI:33738"/>
        <dbReference type="ChEBI" id="CHEBI:57844"/>
        <dbReference type="ChEBI" id="CHEBI:59789"/>
        <dbReference type="ChEBI" id="CHEBI:78809"/>
        <dbReference type="ChEBI" id="CHEBI:83100"/>
        <dbReference type="EC" id="2.8.1.8"/>
    </reaction>
</comment>
<comment type="cofactor">
    <cofactor evidence="1">
        <name>[4Fe-4S] cluster</name>
        <dbReference type="ChEBI" id="CHEBI:49883"/>
    </cofactor>
    <text evidence="1">Binds 2 [4Fe-4S] clusters per subunit. One cluster is coordinated with 3 cysteines and an exchangeable S-adenosyl-L-methionine.</text>
</comment>
<comment type="pathway">
    <text evidence="1">Protein modification; protein lipoylation via endogenous pathway; protein N(6)-(lipoyl)lysine from octanoyl-[acyl-carrier-protein]: step 2/2.</text>
</comment>
<comment type="subcellular location">
    <subcellularLocation>
        <location evidence="1">Cytoplasm</location>
    </subcellularLocation>
</comment>
<comment type="similarity">
    <text evidence="1">Belongs to the radical SAM superfamily. Lipoyl synthase family.</text>
</comment>
<name>LIPA_CHLPD</name>